<sequence>MTEISILNDVQKIIVLDYGSQYNQLIARRIREFGVFSELKSHKITAQELREINPIGIVLSGGPNSVYADNAFGIDPEIFELGIPILGICYGMQLITHKLGGKVVPAGQAGNREYGQSTLHLRETSKLFSGTPQEQLVLMSHGDAVTEIPEGFHLVGDSNDCPYAAIENTEKNLYGIQFHPEVRHSVYGNDILKNFAISICGARGDWSMDNFIDMEIAKIRETVGDRKVLLGLSGGVDSSVVGVLLQKAIGDQLTCIFVDHGLLRKDEGDQVMGMLGGKFGLNIIRVDASKRFLDLLADVEDPEKKRKIIGNEFVYVFDDEASKLKGVDFLAQGTLYTDIIESGTETAQTIKSHHNVGGLPEDMQFELIEPLNTLFKDEVRALGIALGMPEEIVWRQPFPGPGLAIRVMGAITEEKLETVRESDAILREEIAKAGLDRDVWQYFTVNTGVRSVGVMGDGRTYDYTIAIRAITSIDGMTADFAQLPWDVLKKISTRIVNEVDHVNRIVYDITSKPPATVEWE</sequence>
<accession>B5XLN9</accession>
<feature type="chain" id="PRO_1000120437" description="GMP synthase [glutamine-hydrolyzing]">
    <location>
        <begin position="1"/>
        <end position="520"/>
    </location>
</feature>
<feature type="domain" description="Glutamine amidotransferase type-1" evidence="1">
    <location>
        <begin position="12"/>
        <end position="205"/>
    </location>
</feature>
<feature type="domain" description="GMPS ATP-PPase" evidence="1">
    <location>
        <begin position="206"/>
        <end position="395"/>
    </location>
</feature>
<feature type="active site" description="Nucleophile" evidence="1">
    <location>
        <position position="89"/>
    </location>
</feature>
<feature type="active site" evidence="1">
    <location>
        <position position="179"/>
    </location>
</feature>
<feature type="active site" evidence="1">
    <location>
        <position position="181"/>
    </location>
</feature>
<feature type="binding site" evidence="1">
    <location>
        <begin position="233"/>
        <end position="239"/>
    </location>
    <ligand>
        <name>ATP</name>
        <dbReference type="ChEBI" id="CHEBI:30616"/>
    </ligand>
</feature>
<reference key="1">
    <citation type="journal article" date="2008" name="J. Bacteriol.">
        <title>Genome sequence of a nephritogenic and highly transformable M49 strain of Streptococcus pyogenes.</title>
        <authorList>
            <person name="McShan W.M."/>
            <person name="Ferretti J.J."/>
            <person name="Karasawa T."/>
            <person name="Suvorov A.N."/>
            <person name="Lin S."/>
            <person name="Qin B."/>
            <person name="Jia H."/>
            <person name="Kenton S."/>
            <person name="Najar F."/>
            <person name="Wu H."/>
            <person name="Scott J."/>
            <person name="Roe B.A."/>
            <person name="Savic D.J."/>
        </authorList>
    </citation>
    <scope>NUCLEOTIDE SEQUENCE [LARGE SCALE GENOMIC DNA]</scope>
    <source>
        <strain>NZ131</strain>
    </source>
</reference>
<name>GUAA_STRPZ</name>
<dbReference type="EC" id="6.3.5.2" evidence="1"/>
<dbReference type="EMBL" id="CP000829">
    <property type="protein sequence ID" value="ACI61251.1"/>
    <property type="molecule type" value="Genomic_DNA"/>
</dbReference>
<dbReference type="SMR" id="B5XLN9"/>
<dbReference type="MEROPS" id="C26.957"/>
<dbReference type="KEGG" id="soz:Spy49_0949"/>
<dbReference type="HOGENOM" id="CLU_014340_0_5_9"/>
<dbReference type="UniPathway" id="UPA00189">
    <property type="reaction ID" value="UER00296"/>
</dbReference>
<dbReference type="Proteomes" id="UP000001039">
    <property type="component" value="Chromosome"/>
</dbReference>
<dbReference type="GO" id="GO:0005829">
    <property type="term" value="C:cytosol"/>
    <property type="evidence" value="ECO:0007669"/>
    <property type="project" value="TreeGrafter"/>
</dbReference>
<dbReference type="GO" id="GO:0005524">
    <property type="term" value="F:ATP binding"/>
    <property type="evidence" value="ECO:0007669"/>
    <property type="project" value="UniProtKB-UniRule"/>
</dbReference>
<dbReference type="GO" id="GO:0003921">
    <property type="term" value="F:GMP synthase activity"/>
    <property type="evidence" value="ECO:0007669"/>
    <property type="project" value="InterPro"/>
</dbReference>
<dbReference type="CDD" id="cd01742">
    <property type="entry name" value="GATase1_GMP_Synthase"/>
    <property type="match status" value="1"/>
</dbReference>
<dbReference type="CDD" id="cd01997">
    <property type="entry name" value="GMP_synthase_C"/>
    <property type="match status" value="1"/>
</dbReference>
<dbReference type="FunFam" id="3.30.300.10:FF:000002">
    <property type="entry name" value="GMP synthase [glutamine-hydrolyzing]"/>
    <property type="match status" value="1"/>
</dbReference>
<dbReference type="FunFam" id="3.40.50.620:FF:000001">
    <property type="entry name" value="GMP synthase [glutamine-hydrolyzing]"/>
    <property type="match status" value="1"/>
</dbReference>
<dbReference type="FunFam" id="3.40.50.880:FF:000001">
    <property type="entry name" value="GMP synthase [glutamine-hydrolyzing]"/>
    <property type="match status" value="1"/>
</dbReference>
<dbReference type="Gene3D" id="3.30.300.10">
    <property type="match status" value="1"/>
</dbReference>
<dbReference type="Gene3D" id="3.40.50.880">
    <property type="match status" value="1"/>
</dbReference>
<dbReference type="Gene3D" id="3.40.50.620">
    <property type="entry name" value="HUPs"/>
    <property type="match status" value="1"/>
</dbReference>
<dbReference type="HAMAP" id="MF_00344">
    <property type="entry name" value="GMP_synthase"/>
    <property type="match status" value="1"/>
</dbReference>
<dbReference type="InterPro" id="IPR029062">
    <property type="entry name" value="Class_I_gatase-like"/>
</dbReference>
<dbReference type="InterPro" id="IPR017926">
    <property type="entry name" value="GATASE"/>
</dbReference>
<dbReference type="InterPro" id="IPR001674">
    <property type="entry name" value="GMP_synth_C"/>
</dbReference>
<dbReference type="InterPro" id="IPR004739">
    <property type="entry name" value="GMP_synth_GATase"/>
</dbReference>
<dbReference type="InterPro" id="IPR022955">
    <property type="entry name" value="GMP_synthase"/>
</dbReference>
<dbReference type="InterPro" id="IPR025777">
    <property type="entry name" value="GMPS_ATP_PPase_dom"/>
</dbReference>
<dbReference type="InterPro" id="IPR022310">
    <property type="entry name" value="NAD/GMP_synthase"/>
</dbReference>
<dbReference type="InterPro" id="IPR014729">
    <property type="entry name" value="Rossmann-like_a/b/a_fold"/>
</dbReference>
<dbReference type="NCBIfam" id="TIGR00884">
    <property type="entry name" value="guaA_Cterm"/>
    <property type="match status" value="1"/>
</dbReference>
<dbReference type="NCBIfam" id="TIGR00888">
    <property type="entry name" value="guaA_Nterm"/>
    <property type="match status" value="1"/>
</dbReference>
<dbReference type="NCBIfam" id="NF000848">
    <property type="entry name" value="PRK00074.1"/>
    <property type="match status" value="1"/>
</dbReference>
<dbReference type="PANTHER" id="PTHR11922:SF2">
    <property type="entry name" value="GMP SYNTHASE [GLUTAMINE-HYDROLYZING]"/>
    <property type="match status" value="1"/>
</dbReference>
<dbReference type="PANTHER" id="PTHR11922">
    <property type="entry name" value="GMP SYNTHASE-RELATED"/>
    <property type="match status" value="1"/>
</dbReference>
<dbReference type="Pfam" id="PF00117">
    <property type="entry name" value="GATase"/>
    <property type="match status" value="1"/>
</dbReference>
<dbReference type="Pfam" id="PF00958">
    <property type="entry name" value="GMP_synt_C"/>
    <property type="match status" value="1"/>
</dbReference>
<dbReference type="Pfam" id="PF02540">
    <property type="entry name" value="NAD_synthase"/>
    <property type="match status" value="1"/>
</dbReference>
<dbReference type="PRINTS" id="PR00097">
    <property type="entry name" value="ANTSNTHASEII"/>
</dbReference>
<dbReference type="PRINTS" id="PR00099">
    <property type="entry name" value="CPSGATASE"/>
</dbReference>
<dbReference type="PRINTS" id="PR00096">
    <property type="entry name" value="GATASE"/>
</dbReference>
<dbReference type="SUPFAM" id="SSF52402">
    <property type="entry name" value="Adenine nucleotide alpha hydrolases-like"/>
    <property type="match status" value="1"/>
</dbReference>
<dbReference type="SUPFAM" id="SSF52317">
    <property type="entry name" value="Class I glutamine amidotransferase-like"/>
    <property type="match status" value="1"/>
</dbReference>
<dbReference type="SUPFAM" id="SSF54810">
    <property type="entry name" value="GMP synthetase C-terminal dimerisation domain"/>
    <property type="match status" value="1"/>
</dbReference>
<dbReference type="PROSITE" id="PS51273">
    <property type="entry name" value="GATASE_TYPE_1"/>
    <property type="match status" value="1"/>
</dbReference>
<dbReference type="PROSITE" id="PS51553">
    <property type="entry name" value="GMPS_ATP_PPASE"/>
    <property type="match status" value="1"/>
</dbReference>
<organism>
    <name type="scientific">Streptococcus pyogenes serotype M49 (strain NZ131)</name>
    <dbReference type="NCBI Taxonomy" id="471876"/>
    <lineage>
        <taxon>Bacteria</taxon>
        <taxon>Bacillati</taxon>
        <taxon>Bacillota</taxon>
        <taxon>Bacilli</taxon>
        <taxon>Lactobacillales</taxon>
        <taxon>Streptococcaceae</taxon>
        <taxon>Streptococcus</taxon>
    </lineage>
</organism>
<proteinExistence type="inferred from homology"/>
<evidence type="ECO:0000255" key="1">
    <source>
        <dbReference type="HAMAP-Rule" id="MF_00344"/>
    </source>
</evidence>
<protein>
    <recommendedName>
        <fullName evidence="1">GMP synthase [glutamine-hydrolyzing]</fullName>
        <ecNumber evidence="1">6.3.5.2</ecNumber>
    </recommendedName>
    <alternativeName>
        <fullName evidence="1">GMP synthetase</fullName>
    </alternativeName>
    <alternativeName>
        <fullName evidence="1">Glutamine amidotransferase</fullName>
    </alternativeName>
</protein>
<comment type="function">
    <text evidence="1">Catalyzes the synthesis of GMP from XMP.</text>
</comment>
<comment type="catalytic activity">
    <reaction evidence="1">
        <text>XMP + L-glutamine + ATP + H2O = GMP + L-glutamate + AMP + diphosphate + 2 H(+)</text>
        <dbReference type="Rhea" id="RHEA:11680"/>
        <dbReference type="ChEBI" id="CHEBI:15377"/>
        <dbReference type="ChEBI" id="CHEBI:15378"/>
        <dbReference type="ChEBI" id="CHEBI:29985"/>
        <dbReference type="ChEBI" id="CHEBI:30616"/>
        <dbReference type="ChEBI" id="CHEBI:33019"/>
        <dbReference type="ChEBI" id="CHEBI:57464"/>
        <dbReference type="ChEBI" id="CHEBI:58115"/>
        <dbReference type="ChEBI" id="CHEBI:58359"/>
        <dbReference type="ChEBI" id="CHEBI:456215"/>
        <dbReference type="EC" id="6.3.5.2"/>
    </reaction>
</comment>
<comment type="pathway">
    <text evidence="1">Purine metabolism; GMP biosynthesis; GMP from XMP (L-Gln route): step 1/1.</text>
</comment>
<comment type="subunit">
    <text evidence="1">Homodimer.</text>
</comment>
<keyword id="KW-0067">ATP-binding</keyword>
<keyword id="KW-0315">Glutamine amidotransferase</keyword>
<keyword id="KW-0332">GMP biosynthesis</keyword>
<keyword id="KW-0436">Ligase</keyword>
<keyword id="KW-0547">Nucleotide-binding</keyword>
<keyword id="KW-0658">Purine biosynthesis</keyword>
<gene>
    <name evidence="1" type="primary">guaA</name>
    <name type="ordered locus">Spy49_0949</name>
</gene>